<organism>
    <name type="scientific">Oryctolagus cuniculus</name>
    <name type="common">Rabbit</name>
    <dbReference type="NCBI Taxonomy" id="9986"/>
    <lineage>
        <taxon>Eukaryota</taxon>
        <taxon>Metazoa</taxon>
        <taxon>Chordata</taxon>
        <taxon>Craniata</taxon>
        <taxon>Vertebrata</taxon>
        <taxon>Euteleostomi</taxon>
        <taxon>Mammalia</taxon>
        <taxon>Eutheria</taxon>
        <taxon>Euarchontoglires</taxon>
        <taxon>Glires</taxon>
        <taxon>Lagomorpha</taxon>
        <taxon>Leporidae</taxon>
        <taxon>Oryctolagus</taxon>
    </lineage>
</organism>
<name>MYH7_RABIT</name>
<gene>
    <name type="primary">MYH7</name>
</gene>
<evidence type="ECO:0000250" key="1">
    <source>
        <dbReference type="UniProtKB" id="P02563"/>
    </source>
</evidence>
<evidence type="ECO:0000250" key="2">
    <source>
        <dbReference type="UniProtKB" id="P02564"/>
    </source>
</evidence>
<evidence type="ECO:0000250" key="3">
    <source>
        <dbReference type="UniProtKB" id="P12883"/>
    </source>
</evidence>
<evidence type="ECO:0000255" key="4"/>
<evidence type="ECO:0000255" key="5">
    <source>
        <dbReference type="PROSITE-ProRule" id="PRU00116"/>
    </source>
</evidence>
<evidence type="ECO:0000255" key="6">
    <source>
        <dbReference type="PROSITE-ProRule" id="PRU00782"/>
    </source>
</evidence>
<evidence type="ECO:0000256" key="7">
    <source>
        <dbReference type="SAM" id="MobiDB-lite"/>
    </source>
</evidence>
<evidence type="ECO:0000305" key="8"/>
<proteinExistence type="evidence at protein level"/>
<sequence length="736" mass="85432">NWMVTRINATLETKQPRQYFIGVLDIAGFEIFDFNSFEQLCINFTNEKLQQFLNHHMFVLEQEEYKKEGIEWTFIDLGMDLQACIDLIEKPMGIMSILEEECMFPKATDMTFKAKLYDNHLGKSNNFQKPRNIKGKPEAHFALIHYAGTVDYNILGWLQKNKDPLNETVVALYQKSSLKLLSNLFANYAGADAPVEKGKGKAKKGSSFQTVSALHRENLNKLMTNLRSTHPHFVRCIIPNETKSPGVIDNPLVMHQLRCNGVLEGIRICRKGFPNRILYGDFRQRYRILNPAAIPEGQFIDSRKGAEKLLSSLDIDHNQYKFGHTKVFFKAGLLGLLEEMRDERLSRIITRIQAQSRGVLSRMEYKKLLERRDSLLIIQWNIRAFMGVKNWPWMKLYFKIKPLLKSAETEKEMATMKEEFARVKEALEKSEARRKELEEKTVSLLQEKNDLQLQVQAEQDNLADAEERCDQLIKNKIQLEAKVKEMNERLEDEEEMNAELTAKKRKLEDECSELKRDIDDLELTLAKVEKEKHATENKVKNLTEEMAGLDEIIAKLTKKKKALQEAHQQALDDLQAEEDKVNTLTKAKVKLEQQVDDLEGSLEQEKKVRMDLERAKRKLEGDLKLTQESIMDLENDKQQLDERLKKKDFELNALNARIEDEQALGSQLQKKLKELQARIEELEEELEAERTARAKVEKLRSDLSRELEEISERLEEAGGATSVQIEMNKKREAEFQ</sequence>
<reference key="1">
    <citation type="journal article" date="1984" name="J. Biol. Chem.">
        <title>Analysis of cloned mRNA sequences encoding subfragment 2 and part of subfragment 1 of alpha- and beta-myosin heavy chains of rabbit heart.</title>
        <authorList>
            <person name="Kavinsky C.J."/>
            <person name="Umeda P.K."/>
            <person name="Levin J.E."/>
            <person name="Sinha A.M."/>
            <person name="Nigro J.M."/>
            <person name="Jakovcic S."/>
            <person name="Rabinowitz M."/>
        </authorList>
    </citation>
    <scope>NUCLEOTIDE SEQUENCE [MRNA]</scope>
    <source>
        <tissue>Heart ventricle</tissue>
    </source>
</reference>
<reference key="2">
    <citation type="journal article" date="1972" name="J. Biol. Chem.">
        <title>Homologous methylated and nonmethylated histidine peptides in skeletal and cardiac myosins.</title>
        <authorList>
            <person name="Huszar G."/>
            <person name="Elzinga M."/>
        </authorList>
    </citation>
    <scope>PROTEIN SEQUENCE OF 309-321</scope>
    <scope>LACK OF METHYLATION AT HIS-317</scope>
    <source>
        <tissue>Heart</tissue>
    </source>
</reference>
<reference key="3">
    <citation type="journal article" date="1984" name="Proc. Natl. Acad. Sci. U.S.A.">
        <title>Characterization of genomic clones specifying rabbit alpha- and beta-ventricular myosin heavy chains.</title>
        <authorList>
            <person name="Friedman D.J."/>
            <person name="Umeda P.K."/>
            <person name="Sinha A.M."/>
            <person name="Hsu H.J."/>
            <person name="Jokovcic S."/>
            <person name="Rabinowitz M."/>
        </authorList>
    </citation>
    <scope>NUCLEOTIDE SEQUENCE [MRNA] OF 458-544</scope>
</reference>
<reference key="4">
    <citation type="journal article" date="1982" name="Proc. Natl. Acad. Sci. U.S.A.">
        <title>Molecular cloning of mRNA sequences for cardiac alpha- and beta-form myosin heavy chains: expression in ventricles of normal, hypothyroid, and thyrotoxic rabbits.</title>
        <authorList>
            <person name="Sinha A.M."/>
            <person name="Umeda P.K."/>
            <person name="Kavinsky C.J."/>
            <person name="Rajamanickam C."/>
            <person name="Hsu H.J."/>
            <person name="Jakovcic S."/>
            <person name="Rabinowitz M."/>
        </authorList>
    </citation>
    <scope>NUCLEOTIDE SEQUENCE [MRNA] OF 600-720</scope>
</reference>
<feature type="chain" id="PRO_0000123412" description="Myosin-7">
    <location>
        <begin position="1" status="less than"/>
        <end position="736" status="greater than"/>
    </location>
</feature>
<feature type="domain" description="Myosin motor" evidence="6">
    <location>
        <begin position="1" status="less than"/>
        <end position="342"/>
    </location>
</feature>
<feature type="domain" description="IQ" evidence="5">
    <location>
        <begin position="345"/>
        <end position="374"/>
    </location>
</feature>
<feature type="region of interest" description="Actin-binding" evidence="6">
    <location>
        <begin position="219"/>
        <end position="241"/>
    </location>
</feature>
<feature type="region of interest" description="Disordered" evidence="7">
    <location>
        <begin position="716"/>
        <end position="736"/>
    </location>
</feature>
<feature type="coiled-coil region" evidence="4">
    <location>
        <begin position="403"/>
        <end position="736" status="greater than"/>
    </location>
</feature>
<feature type="compositionally biased region" description="Basic and acidic residues" evidence="7">
    <location>
        <begin position="727"/>
        <end position="736"/>
    </location>
</feature>
<feature type="modified residue" description="Phosphoserine" evidence="1">
    <location>
        <position position="701"/>
    </location>
</feature>
<feature type="sequence conflict" description="In Ref. 2; AA sequence." evidence="8" ref="2">
    <original>NQ</original>
    <variation>QN</variation>
    <location>
        <begin position="318"/>
        <end position="319"/>
    </location>
</feature>
<feature type="non-terminal residue">
    <location>
        <position position="1"/>
    </location>
</feature>
<feature type="non-terminal residue">
    <location>
        <position position="736"/>
    </location>
</feature>
<accession>P04461</accession>
<dbReference type="EMBL" id="K02444">
    <property type="protein sequence ID" value="AAA31414.1"/>
    <property type="molecule type" value="mRNA"/>
</dbReference>
<dbReference type="EMBL" id="K01696">
    <property type="protein sequence ID" value="AAA31417.1"/>
    <property type="molecule type" value="mRNA"/>
</dbReference>
<dbReference type="EMBL" id="J00672">
    <property type="protein sequence ID" value="AAA31413.1"/>
    <property type="molecule type" value="mRNA"/>
</dbReference>
<dbReference type="SMR" id="P04461"/>
<dbReference type="PaxDb" id="9986-ENSOCUP00000021291"/>
<dbReference type="ABCD" id="P04461">
    <property type="antibodies" value="1 sequenced antibody"/>
</dbReference>
<dbReference type="eggNOG" id="KOG0161">
    <property type="taxonomic scope" value="Eukaryota"/>
</dbReference>
<dbReference type="InParanoid" id="P04461"/>
<dbReference type="Proteomes" id="UP000001811">
    <property type="component" value="Unplaced"/>
</dbReference>
<dbReference type="GO" id="GO:0030016">
    <property type="term" value="C:myofibril"/>
    <property type="evidence" value="ECO:0000250"/>
    <property type="project" value="UniProtKB"/>
</dbReference>
<dbReference type="GO" id="GO:0032982">
    <property type="term" value="C:myosin filament"/>
    <property type="evidence" value="ECO:0000250"/>
    <property type="project" value="UniProtKB"/>
</dbReference>
<dbReference type="GO" id="GO:0016460">
    <property type="term" value="C:myosin II complex"/>
    <property type="evidence" value="ECO:0007669"/>
    <property type="project" value="TreeGrafter"/>
</dbReference>
<dbReference type="GO" id="GO:0030017">
    <property type="term" value="C:sarcomere"/>
    <property type="evidence" value="ECO:0000250"/>
    <property type="project" value="UniProtKB"/>
</dbReference>
<dbReference type="GO" id="GO:0051015">
    <property type="term" value="F:actin filament binding"/>
    <property type="evidence" value="ECO:0007669"/>
    <property type="project" value="TreeGrafter"/>
</dbReference>
<dbReference type="GO" id="GO:0005524">
    <property type="term" value="F:ATP binding"/>
    <property type="evidence" value="ECO:0007669"/>
    <property type="project" value="UniProtKB-KW"/>
</dbReference>
<dbReference type="GO" id="GO:0005516">
    <property type="term" value="F:calmodulin binding"/>
    <property type="evidence" value="ECO:0007669"/>
    <property type="project" value="UniProtKB-KW"/>
</dbReference>
<dbReference type="GO" id="GO:0000146">
    <property type="term" value="F:microfilament motor activity"/>
    <property type="evidence" value="ECO:0007669"/>
    <property type="project" value="TreeGrafter"/>
</dbReference>
<dbReference type="GO" id="GO:0007512">
    <property type="term" value="P:adult heart development"/>
    <property type="evidence" value="ECO:0007669"/>
    <property type="project" value="TreeGrafter"/>
</dbReference>
<dbReference type="GO" id="GO:0060048">
    <property type="term" value="P:cardiac muscle contraction"/>
    <property type="evidence" value="ECO:0007669"/>
    <property type="project" value="TreeGrafter"/>
</dbReference>
<dbReference type="GO" id="GO:0030049">
    <property type="term" value="P:muscle filament sliding"/>
    <property type="evidence" value="ECO:0007669"/>
    <property type="project" value="TreeGrafter"/>
</dbReference>
<dbReference type="GO" id="GO:0045214">
    <property type="term" value="P:sarcomere organization"/>
    <property type="evidence" value="ECO:0007669"/>
    <property type="project" value="TreeGrafter"/>
</dbReference>
<dbReference type="FunFam" id="1.20.5.340:FF:000002">
    <property type="entry name" value="Myosin heavy chain"/>
    <property type="match status" value="1"/>
</dbReference>
<dbReference type="FunFam" id="1.20.5.340:FF:000004">
    <property type="entry name" value="Myosin heavy chain"/>
    <property type="match status" value="1"/>
</dbReference>
<dbReference type="FunFam" id="1.20.5.340:FF:000006">
    <property type="entry name" value="Myosin heavy chain"/>
    <property type="match status" value="1"/>
</dbReference>
<dbReference type="FunFam" id="1.20.5.4820:FF:000001">
    <property type="entry name" value="Myosin heavy chain"/>
    <property type="match status" value="1"/>
</dbReference>
<dbReference type="FunFam" id="1.20.58.530:FF:000001">
    <property type="entry name" value="Myosin heavy chain"/>
    <property type="match status" value="1"/>
</dbReference>
<dbReference type="Gene3D" id="1.20.5.340">
    <property type="match status" value="3"/>
</dbReference>
<dbReference type="Gene3D" id="1.20.5.4820">
    <property type="match status" value="1"/>
</dbReference>
<dbReference type="Gene3D" id="1.20.58.530">
    <property type="match status" value="1"/>
</dbReference>
<dbReference type="Gene3D" id="3.40.850.10">
    <property type="entry name" value="Kinesin motor domain"/>
    <property type="match status" value="1"/>
</dbReference>
<dbReference type="Gene3D" id="1.20.120.720">
    <property type="entry name" value="Myosin VI head, motor domain, U50 subdomain"/>
    <property type="match status" value="1"/>
</dbReference>
<dbReference type="InterPro" id="IPR036961">
    <property type="entry name" value="Kinesin_motor_dom_sf"/>
</dbReference>
<dbReference type="InterPro" id="IPR001609">
    <property type="entry name" value="Myosin_head_motor_dom-like"/>
</dbReference>
<dbReference type="InterPro" id="IPR002928">
    <property type="entry name" value="Myosin_tail"/>
</dbReference>
<dbReference type="InterPro" id="IPR027417">
    <property type="entry name" value="P-loop_NTPase"/>
</dbReference>
<dbReference type="PANTHER" id="PTHR45615">
    <property type="entry name" value="MYOSIN HEAVY CHAIN, NON-MUSCLE"/>
    <property type="match status" value="1"/>
</dbReference>
<dbReference type="PANTHER" id="PTHR45615:SF1">
    <property type="entry name" value="MYOSIN-7"/>
    <property type="match status" value="1"/>
</dbReference>
<dbReference type="Pfam" id="PF00063">
    <property type="entry name" value="Myosin_head"/>
    <property type="match status" value="1"/>
</dbReference>
<dbReference type="Pfam" id="PF01576">
    <property type="entry name" value="Myosin_tail_1"/>
    <property type="match status" value="1"/>
</dbReference>
<dbReference type="PRINTS" id="PR00193">
    <property type="entry name" value="MYOSINHEAVY"/>
</dbReference>
<dbReference type="SMART" id="SM00242">
    <property type="entry name" value="MYSc"/>
    <property type="match status" value="1"/>
</dbReference>
<dbReference type="SUPFAM" id="SSF90257">
    <property type="entry name" value="Myosin rod fragments"/>
    <property type="match status" value="3"/>
</dbReference>
<dbReference type="SUPFAM" id="SSF52540">
    <property type="entry name" value="P-loop containing nucleoside triphosphate hydrolases"/>
    <property type="match status" value="1"/>
</dbReference>
<dbReference type="PROSITE" id="PS50096">
    <property type="entry name" value="IQ"/>
    <property type="match status" value="1"/>
</dbReference>
<dbReference type="PROSITE" id="PS51456">
    <property type="entry name" value="MYOSIN_MOTOR"/>
    <property type="match status" value="1"/>
</dbReference>
<keyword id="KW-0009">Actin-binding</keyword>
<keyword id="KW-0067">ATP-binding</keyword>
<keyword id="KW-0112">Calmodulin-binding</keyword>
<keyword id="KW-0175">Coiled coil</keyword>
<keyword id="KW-0963">Cytoplasm</keyword>
<keyword id="KW-0903">Direct protein sequencing</keyword>
<keyword id="KW-0505">Motor protein</keyword>
<keyword id="KW-0514">Muscle protein</keyword>
<keyword id="KW-0518">Myosin</keyword>
<keyword id="KW-0547">Nucleotide-binding</keyword>
<keyword id="KW-0597">Phosphoprotein</keyword>
<keyword id="KW-1185">Reference proteome</keyword>
<keyword id="KW-0787">Thick filament</keyword>
<comment type="function">
    <text evidence="3">Myosins are actin-based motor molecules with ATPase activity essential for muscle contraction. Forms regular bipolar thick filaments that, together with actin thin filaments, constitute the fundamental contractile unit of skeletal and cardiac muscle.</text>
</comment>
<comment type="subunit">
    <text evidence="3">Muscle myosin is a hexameric protein that consists of 2 heavy chain subunits (MHC), 2 alkali light chain subunits (MLC) and 2 regulatory light chain subunits (MLC-2). Interacts with ECPAS. Interacts (via C-terminus) with LRRC39.</text>
</comment>
<comment type="subcellular location">
    <subcellularLocation>
        <location evidence="2">Cytoplasm</location>
        <location evidence="2">Myofibril</location>
    </subcellularLocation>
    <subcellularLocation>
        <location evidence="2">Cytoplasm</location>
        <location evidence="2">Myofibril</location>
        <location evidence="2">Sarcomere</location>
    </subcellularLocation>
    <text evidence="2">Thick filaments of the myofibrils.</text>
</comment>
<comment type="domain">
    <text evidence="8">Limited proteolysis of myosin heavy chain produces 1 light meromyosin (LMM) and 1 heavy meromyosin (HMM). HMM can be further cleaved into 2 globular subfragments (S1) and 1 rod-shaped subfragment (S2).</text>
</comment>
<comment type="domain">
    <text evidence="3">The rodlike tail sequence is highly repetitive, showing cycles of a 28-residue repeat pattern composed of 4 heptapeptides, characteristic for alpha-helical coiled coils. Four skip residues (Skip1-4) introduce discontinuities in the coiled-coil heptad repeats. The first three skip residues are structurally comparable and induce a unique local relaxation of the coiled-coil superhelical pitch and the fourth skip residue lies within a highly flexible molecular hinge that is necessary for myosin incorporation in the bare zone of sarcomeres.</text>
</comment>
<comment type="miscellaneous">
    <text>The cardiac alpha isoform is a 'fast' ATPase myosin, while the beta isoform is a 'slow' ATPase.</text>
</comment>
<comment type="similarity">
    <text evidence="8">Belongs to the TRAFAC class myosin-kinesin ATPase superfamily. Myosin family.</text>
</comment>
<comment type="caution">
    <text evidence="8">Represents a conventional myosin. This protein should not be confused with the unconventional myosin-7 (MYO7).</text>
</comment>
<protein>
    <recommendedName>
        <fullName>Myosin-7</fullName>
    </recommendedName>
    <alternativeName>
        <fullName>Beta isomyosin</fullName>
    </alternativeName>
    <alternativeName>
        <fullName>Myosin heavy chain 7</fullName>
    </alternativeName>
    <alternativeName>
        <fullName>Myosin heavy chain slow isoform</fullName>
        <shortName>MyHC-slow</shortName>
    </alternativeName>
    <alternativeName>
        <fullName>Myosin heavy chain, cardiac muscle beta isoform</fullName>
        <shortName>MyHC-beta</shortName>
    </alternativeName>
</protein>